<accession>B3LF48</accession>
<accession>F4JGH2</accession>
<accession>Q9S9W1</accession>
<name>EHD2_ARATH</name>
<reference key="1">
    <citation type="journal article" date="1999" name="Nature">
        <title>Sequence and analysis of chromosome 4 of the plant Arabidopsis thaliana.</title>
        <authorList>
            <person name="Mayer K.F.X."/>
            <person name="Schueller C."/>
            <person name="Wambutt R."/>
            <person name="Murphy G."/>
            <person name="Volckaert G."/>
            <person name="Pohl T."/>
            <person name="Duesterhoeft A."/>
            <person name="Stiekema W."/>
            <person name="Entian K.-D."/>
            <person name="Terryn N."/>
            <person name="Harris B."/>
            <person name="Ansorge W."/>
            <person name="Brandt P."/>
            <person name="Grivell L.A."/>
            <person name="Rieger M."/>
            <person name="Weichselgartner M."/>
            <person name="de Simone V."/>
            <person name="Obermaier B."/>
            <person name="Mache R."/>
            <person name="Mueller M."/>
            <person name="Kreis M."/>
            <person name="Delseny M."/>
            <person name="Puigdomenech P."/>
            <person name="Watson M."/>
            <person name="Schmidtheini T."/>
            <person name="Reichert B."/>
            <person name="Portetelle D."/>
            <person name="Perez-Alonso M."/>
            <person name="Boutry M."/>
            <person name="Bancroft I."/>
            <person name="Vos P."/>
            <person name="Hoheisel J."/>
            <person name="Zimmermann W."/>
            <person name="Wedler H."/>
            <person name="Ridley P."/>
            <person name="Langham S.-A."/>
            <person name="McCullagh B."/>
            <person name="Bilham L."/>
            <person name="Robben J."/>
            <person name="van der Schueren J."/>
            <person name="Grymonprez B."/>
            <person name="Chuang Y.-J."/>
            <person name="Vandenbussche F."/>
            <person name="Braeken M."/>
            <person name="Weltjens I."/>
            <person name="Voet M."/>
            <person name="Bastiaens I."/>
            <person name="Aert R."/>
            <person name="Defoor E."/>
            <person name="Weitzenegger T."/>
            <person name="Bothe G."/>
            <person name="Ramsperger U."/>
            <person name="Hilbert H."/>
            <person name="Braun M."/>
            <person name="Holzer E."/>
            <person name="Brandt A."/>
            <person name="Peters S."/>
            <person name="van Staveren M."/>
            <person name="Dirkse W."/>
            <person name="Mooijman P."/>
            <person name="Klein Lankhorst R."/>
            <person name="Rose M."/>
            <person name="Hauf J."/>
            <person name="Koetter P."/>
            <person name="Berneiser S."/>
            <person name="Hempel S."/>
            <person name="Feldpausch M."/>
            <person name="Lamberth S."/>
            <person name="Van den Daele H."/>
            <person name="De Keyser A."/>
            <person name="Buysshaert C."/>
            <person name="Gielen J."/>
            <person name="Villarroel R."/>
            <person name="De Clercq R."/>
            <person name="van Montagu M."/>
            <person name="Rogers J."/>
            <person name="Cronin A."/>
            <person name="Quail M.A."/>
            <person name="Bray-Allen S."/>
            <person name="Clark L."/>
            <person name="Doggett J."/>
            <person name="Hall S."/>
            <person name="Kay M."/>
            <person name="Lennard N."/>
            <person name="McLay K."/>
            <person name="Mayes R."/>
            <person name="Pettett A."/>
            <person name="Rajandream M.A."/>
            <person name="Lyne M."/>
            <person name="Benes V."/>
            <person name="Rechmann S."/>
            <person name="Borkova D."/>
            <person name="Bloecker H."/>
            <person name="Scharfe M."/>
            <person name="Grimm M."/>
            <person name="Loehnert T.-H."/>
            <person name="Dose S."/>
            <person name="de Haan M."/>
            <person name="Maarse A.C."/>
            <person name="Schaefer M."/>
            <person name="Mueller-Auer S."/>
            <person name="Gabel C."/>
            <person name="Fuchs M."/>
            <person name="Fartmann B."/>
            <person name="Granderath K."/>
            <person name="Dauner D."/>
            <person name="Herzl A."/>
            <person name="Neumann S."/>
            <person name="Argiriou A."/>
            <person name="Vitale D."/>
            <person name="Liguori R."/>
            <person name="Piravandi E."/>
            <person name="Massenet O."/>
            <person name="Quigley F."/>
            <person name="Clabauld G."/>
            <person name="Muendlein A."/>
            <person name="Felber R."/>
            <person name="Schnabl S."/>
            <person name="Hiller R."/>
            <person name="Schmidt W."/>
            <person name="Lecharny A."/>
            <person name="Aubourg S."/>
            <person name="Chefdor F."/>
            <person name="Cooke R."/>
            <person name="Berger C."/>
            <person name="Monfort A."/>
            <person name="Casacuberta E."/>
            <person name="Gibbons T."/>
            <person name="Weber N."/>
            <person name="Vandenbol M."/>
            <person name="Bargues M."/>
            <person name="Terol J."/>
            <person name="Torres A."/>
            <person name="Perez-Perez A."/>
            <person name="Purnelle B."/>
            <person name="Bent E."/>
            <person name="Johnson S."/>
            <person name="Tacon D."/>
            <person name="Jesse T."/>
            <person name="Heijnen L."/>
            <person name="Schwarz S."/>
            <person name="Scholler P."/>
            <person name="Heber S."/>
            <person name="Francs P."/>
            <person name="Bielke C."/>
            <person name="Frishman D."/>
            <person name="Haase D."/>
            <person name="Lemcke K."/>
            <person name="Mewes H.-W."/>
            <person name="Stocker S."/>
            <person name="Zaccaria P."/>
            <person name="Bevan M."/>
            <person name="Wilson R.K."/>
            <person name="de la Bastide M."/>
            <person name="Habermann K."/>
            <person name="Parnell L."/>
            <person name="Dedhia N."/>
            <person name="Gnoj L."/>
            <person name="Schutz K."/>
            <person name="Huang E."/>
            <person name="Spiegel L."/>
            <person name="Sekhon M."/>
            <person name="Murray J."/>
            <person name="Sheet P."/>
            <person name="Cordes M."/>
            <person name="Abu-Threideh J."/>
            <person name="Stoneking T."/>
            <person name="Kalicki J."/>
            <person name="Graves T."/>
            <person name="Harmon G."/>
            <person name="Edwards J."/>
            <person name="Latreille P."/>
            <person name="Courtney L."/>
            <person name="Cloud J."/>
            <person name="Abbott A."/>
            <person name="Scott K."/>
            <person name="Johnson D."/>
            <person name="Minx P."/>
            <person name="Bentley D."/>
            <person name="Fulton B."/>
            <person name="Miller N."/>
            <person name="Greco T."/>
            <person name="Kemp K."/>
            <person name="Kramer J."/>
            <person name="Fulton L."/>
            <person name="Mardis E."/>
            <person name="Dante M."/>
            <person name="Pepin K."/>
            <person name="Hillier L.W."/>
            <person name="Nelson J."/>
            <person name="Spieth J."/>
            <person name="Ryan E."/>
            <person name="Andrews S."/>
            <person name="Geisel C."/>
            <person name="Layman D."/>
            <person name="Du H."/>
            <person name="Ali J."/>
            <person name="Berghoff A."/>
            <person name="Jones K."/>
            <person name="Drone K."/>
            <person name="Cotton M."/>
            <person name="Joshu C."/>
            <person name="Antonoiu B."/>
            <person name="Zidanic M."/>
            <person name="Strong C."/>
            <person name="Sun H."/>
            <person name="Lamar B."/>
            <person name="Yordan C."/>
            <person name="Ma P."/>
            <person name="Zhong J."/>
            <person name="Preston R."/>
            <person name="Vil D."/>
            <person name="Shekher M."/>
            <person name="Matero A."/>
            <person name="Shah R."/>
            <person name="Swaby I.K."/>
            <person name="O'Shaughnessy A."/>
            <person name="Rodriguez M."/>
            <person name="Hoffman J."/>
            <person name="Till S."/>
            <person name="Granat S."/>
            <person name="Shohdy N."/>
            <person name="Hasegawa A."/>
            <person name="Hameed A."/>
            <person name="Lodhi M."/>
            <person name="Johnson A."/>
            <person name="Chen E."/>
            <person name="Marra M.A."/>
            <person name="Martienssen R."/>
            <person name="McCombie W.R."/>
        </authorList>
    </citation>
    <scope>NUCLEOTIDE SEQUENCE [LARGE SCALE GENOMIC DNA]</scope>
    <source>
        <strain>cv. Columbia</strain>
    </source>
</reference>
<reference key="2">
    <citation type="journal article" date="2017" name="Plant J.">
        <title>Araport11: a complete reannotation of the Arabidopsis thaliana reference genome.</title>
        <authorList>
            <person name="Cheng C.Y."/>
            <person name="Krishnakumar V."/>
            <person name="Chan A.P."/>
            <person name="Thibaud-Nissen F."/>
            <person name="Schobel S."/>
            <person name="Town C.D."/>
        </authorList>
    </citation>
    <scope>GENOME REANNOTATION</scope>
    <source>
        <strain>cv. Columbia</strain>
    </source>
</reference>
<reference key="3">
    <citation type="submission" date="2008-06" db="EMBL/GenBank/DDBJ databases">
        <title>Arabidopsis ORF clones.</title>
        <authorList>
            <person name="de los Reyes C."/>
            <person name="Quan R."/>
            <person name="Chen H."/>
            <person name="Bautista V."/>
            <person name="Kim C.J."/>
            <person name="Ecker J.R."/>
        </authorList>
    </citation>
    <scope>NUCLEOTIDE SEQUENCE [LARGE SCALE MRNA]</scope>
    <source>
        <strain>cv. Columbia</strain>
    </source>
</reference>
<reference key="4">
    <citation type="journal article" date="2008" name="Plant J.">
        <title>AtEHDs, novel Arabidopsis EH-domain-containing proteins involved in endocytosis.</title>
        <authorList>
            <person name="Bar M."/>
            <person name="Aharon M."/>
            <person name="Benjamin S."/>
            <person name="Rotblat B."/>
            <person name="Horowitz M."/>
            <person name="Avni A."/>
        </authorList>
    </citation>
    <scope>FUNCTION</scope>
    <scope>DISRUPTION PHENOTYPE</scope>
    <scope>SUBCELLULAR LOCATION</scope>
    <scope>SUBUNIT</scope>
    <scope>GENE FAMILY</scope>
    <scope>NOMENCLATURE</scope>
    <source>
        <strain>cv. Columbia</strain>
    </source>
</reference>
<reference key="5">
    <citation type="journal article" date="2008" name="Plant Signal. Behav.">
        <title>AtEHDs in endocytosis.</title>
        <authorList>
            <person name="Bar M."/>
            <person name="Benjamin S."/>
            <person name="Horowitz M."/>
            <person name="Avni A."/>
        </authorList>
    </citation>
    <scope>REVIEW</scope>
</reference>
<reference key="6">
    <citation type="journal article" date="2009" name="PLoS ONE">
        <title>The coiled-coil domain of EHD2 mediates inhibition of LeEix2 endocytosis and signaling.</title>
        <authorList>
            <person name="Bar M."/>
            <person name="Sharfman M."/>
            <person name="Schuster S."/>
            <person name="Avni A."/>
        </authorList>
    </citation>
    <scope>FUNCTION</scope>
    <scope>MUTAGENESIS OF GLY-37; GLY-204 AND 488-GLU--ASN-546</scope>
    <scope>DOMAIN COILED COIL</scope>
    <scope>SUBCELLULAR LOCATION</scope>
    <scope>INTERACTION WITH AT2G19790</scope>
</reference>
<feature type="chain" id="PRO_0000431806" description="EH domain-containing protein 2">
    <location>
        <begin position="1"/>
        <end position="546"/>
    </location>
</feature>
<feature type="domain" description="EF-hand 1" evidence="6">
    <location>
        <begin position="15"/>
        <end position="50"/>
    </location>
</feature>
<feature type="domain" description="EH" evidence="5">
    <location>
        <begin position="16"/>
        <end position="94"/>
    </location>
</feature>
<feature type="domain" description="EF-hand 2" evidence="6">
    <location>
        <begin position="51"/>
        <end position="84"/>
    </location>
</feature>
<feature type="domain" description="Dynamin-type G" evidence="9">
    <location>
        <begin position="194"/>
        <end position="430"/>
    </location>
</feature>
<feature type="region of interest" description="G1 motif" evidence="9">
    <location>
        <begin position="204"/>
        <end position="211"/>
    </location>
</feature>
<feature type="region of interest" description="G2 motif" evidence="9">
    <location>
        <begin position="230"/>
        <end position="231"/>
    </location>
</feature>
<feature type="region of interest" description="G3 motif" evidence="9">
    <location>
        <begin position="292"/>
        <end position="295"/>
    </location>
</feature>
<feature type="region of interest" description="G4 motif" evidence="9">
    <location>
        <begin position="358"/>
        <end position="361"/>
    </location>
</feature>
<feature type="region of interest" description="G5 motif" evidence="9">
    <location>
        <position position="382"/>
    </location>
</feature>
<feature type="coiled-coil region" evidence="4">
    <location>
        <begin position="467"/>
        <end position="490"/>
    </location>
</feature>
<feature type="short sequence motif" description="Nuclear localization signal" evidence="8">
    <location>
        <begin position="429"/>
        <end position="436"/>
    </location>
</feature>
<feature type="binding site" evidence="13">
    <location>
        <position position="28"/>
    </location>
    <ligand>
        <name>Ca(2+)</name>
        <dbReference type="ChEBI" id="CHEBI:29108"/>
        <label>1</label>
    </ligand>
</feature>
<feature type="binding site" evidence="13">
    <location>
        <position position="30"/>
    </location>
    <ligand>
        <name>Ca(2+)</name>
        <dbReference type="ChEBI" id="CHEBI:29108"/>
        <label>1</label>
    </ligand>
</feature>
<feature type="binding site" evidence="13">
    <location>
        <position position="32"/>
    </location>
    <ligand>
        <name>Ca(2+)</name>
        <dbReference type="ChEBI" id="CHEBI:29108"/>
        <label>1</label>
    </ligand>
</feature>
<feature type="binding site" evidence="13">
    <location>
        <position position="34"/>
    </location>
    <ligand>
        <name>Ca(2+)</name>
        <dbReference type="ChEBI" id="CHEBI:29108"/>
        <label>1</label>
    </ligand>
</feature>
<feature type="binding site" evidence="13">
    <location>
        <position position="39"/>
    </location>
    <ligand>
        <name>Ca(2+)</name>
        <dbReference type="ChEBI" id="CHEBI:29108"/>
        <label>1</label>
    </ligand>
</feature>
<feature type="binding site" evidence="13">
    <location>
        <position position="62"/>
    </location>
    <ligand>
        <name>Ca(2+)</name>
        <dbReference type="ChEBI" id="CHEBI:29108"/>
        <label>2</label>
    </ligand>
</feature>
<feature type="binding site" evidence="13">
    <location>
        <position position="73"/>
    </location>
    <ligand>
        <name>Ca(2+)</name>
        <dbReference type="ChEBI" id="CHEBI:29108"/>
        <label>2</label>
    </ligand>
</feature>
<feature type="binding site" evidence="7">
    <location>
        <begin position="204"/>
        <end position="211"/>
    </location>
    <ligand>
        <name>GTP</name>
        <dbReference type="ChEBI" id="CHEBI:37565"/>
    </ligand>
</feature>
<feature type="binding site" evidence="7">
    <location>
        <begin position="292"/>
        <end position="296"/>
    </location>
    <ligand>
        <name>GTP</name>
        <dbReference type="ChEBI" id="CHEBI:37565"/>
    </ligand>
</feature>
<feature type="binding site" evidence="2">
    <location>
        <position position="359"/>
    </location>
    <ligand>
        <name>GTP</name>
        <dbReference type="ChEBI" id="CHEBI:37565"/>
    </ligand>
</feature>
<feature type="binding site" evidence="7">
    <location>
        <begin position="395"/>
        <end position="398"/>
    </location>
    <ligand>
        <name>GTP</name>
        <dbReference type="ChEBI" id="CHEBI:37565"/>
    </ligand>
</feature>
<feature type="splice variant" id="VSP_057385" description="In isoform 2.">
    <location>
        <position position="132"/>
    </location>
</feature>
<feature type="mutagenesis site" description="Slighty increased nuclear subcellular localization." evidence="11">
    <original>G</original>
    <variation>R</variation>
    <location>
        <position position="37"/>
    </location>
</feature>
<feature type="mutagenesis site" description="Loss of negative effect on endocytosis." evidence="11">
    <original>G</original>
    <variation>R</variation>
    <location>
        <position position="204"/>
    </location>
</feature>
<feature type="mutagenesis site" description="Loss of negative effect on endocytosis." evidence="11">
    <location>
        <begin position="488"/>
        <end position="546"/>
    </location>
</feature>
<sequence>METSSTISIGSCLKEHQKIYKEWFNIADSDGDGRVSGNDATKFFAMSKLSRQELKQVWAVADSKRQGFLGLSEFITAMKLVSLAQEGHEITSDLLKGSIDMKSVELPVLEGLENVVSKQKVSKTNVDVEDNVVTKPQVTAKTPWFKSKSIIKPQVNVVTIVDGLKRLYTEKLKPLEVTYRFNDFASPVLTSSDFDAKPMVMLLGQYSTGKTTFIKHLLGCDYPGAHIGPEPTTDRFVVAMSGPDERTIPGNTMAVQADMPFNGLTSFGGAFLSKFECSQMPHPVLDQITLVDTPGVLSGEKQRMQRSYDFTGVISWFASKCDMILLLFDPHKLDISDEFKRVITSLRGNEDKIRVVLNKADQVDTQQLMRVYGALMWSLGKVLNTPEVVRVYIGSFNDKPINEVAVGPIGKELFEKEQNDLLADLMDVPKKACDRKINEFVKRARSAKINAYIMSHLKKEMPAMMGKSKAQQRLMDNLEEEFGKVQREFHLPAGDFPSVEHFREVLGGYNIDKFEKLKPKMIQAVDDMLGYDIPDLLKKFRNPYDN</sequence>
<keyword id="KW-0025">Alternative splicing</keyword>
<keyword id="KW-0106">Calcium</keyword>
<keyword id="KW-1003">Cell membrane</keyword>
<keyword id="KW-0175">Coiled coil</keyword>
<keyword id="KW-0963">Cytoplasm</keyword>
<keyword id="KW-0254">Endocytosis</keyword>
<keyword id="KW-0967">Endosome</keyword>
<keyword id="KW-0342">GTP-binding</keyword>
<keyword id="KW-0378">Hydrolase</keyword>
<keyword id="KW-0472">Membrane</keyword>
<keyword id="KW-0479">Metal-binding</keyword>
<keyword id="KW-0547">Nucleotide-binding</keyword>
<keyword id="KW-0539">Nucleus</keyword>
<keyword id="KW-1185">Reference proteome</keyword>
<keyword id="KW-0677">Repeat</keyword>
<gene>
    <name evidence="12" type="primary">EHD2</name>
    <name evidence="14" type="ordered locus">At4g05520</name>
    <name evidence="15" type="ORF">T1J24.10</name>
</gene>
<dbReference type="EC" id="3.6.5.2" evidence="7"/>
<dbReference type="EMBL" id="AF147263">
    <property type="protein sequence ID" value="AAD48968.1"/>
    <property type="status" value="ALT_SEQ"/>
    <property type="molecule type" value="Genomic_DNA"/>
</dbReference>
<dbReference type="EMBL" id="AL161503">
    <property type="protein sequence ID" value="CAB81094.1"/>
    <property type="status" value="ALT_SEQ"/>
    <property type="molecule type" value="Genomic_DNA"/>
</dbReference>
<dbReference type="EMBL" id="CP002687">
    <property type="protein sequence ID" value="AEE82529.1"/>
    <property type="molecule type" value="Genomic_DNA"/>
</dbReference>
<dbReference type="EMBL" id="CP002687">
    <property type="protein sequence ID" value="AEE82530.1"/>
    <property type="molecule type" value="Genomic_DNA"/>
</dbReference>
<dbReference type="EMBL" id="BT033036">
    <property type="protein sequence ID" value="ACE79044.1"/>
    <property type="molecule type" value="mRNA"/>
</dbReference>
<dbReference type="PIR" id="D85069">
    <property type="entry name" value="D85069"/>
</dbReference>
<dbReference type="RefSeq" id="NP_567299.2">
    <molecule id="B3LF48-1"/>
    <property type="nucleotide sequence ID" value="NM_116790.3"/>
</dbReference>
<dbReference type="RefSeq" id="NP_974517.1">
    <molecule id="B3LF48-2"/>
    <property type="nucleotide sequence ID" value="NM_202788.1"/>
</dbReference>
<dbReference type="SMR" id="B3LF48"/>
<dbReference type="FunCoup" id="B3LF48">
    <property type="interactions" value="1676"/>
</dbReference>
<dbReference type="IntAct" id="B3LF48">
    <property type="interactions" value="1"/>
</dbReference>
<dbReference type="STRING" id="3702.B3LF48"/>
<dbReference type="iPTMnet" id="B3LF48"/>
<dbReference type="PaxDb" id="3702-AT4G05520.1"/>
<dbReference type="ProteomicsDB" id="221848">
    <molecule id="B3LF48-1"/>
</dbReference>
<dbReference type="EnsemblPlants" id="AT4G05520.1">
    <molecule id="B3LF48-1"/>
    <property type="protein sequence ID" value="AT4G05520.1"/>
    <property type="gene ID" value="AT4G05520"/>
</dbReference>
<dbReference type="EnsemblPlants" id="AT4G05520.2">
    <molecule id="B3LF48-2"/>
    <property type="protein sequence ID" value="AT4G05520.2"/>
    <property type="gene ID" value="AT4G05520"/>
</dbReference>
<dbReference type="GeneID" id="825902"/>
<dbReference type="Gramene" id="AT4G05520.1">
    <molecule id="B3LF48-1"/>
    <property type="protein sequence ID" value="AT4G05520.1"/>
    <property type="gene ID" value="AT4G05520"/>
</dbReference>
<dbReference type="Gramene" id="AT4G05520.2">
    <molecule id="B3LF48-2"/>
    <property type="protein sequence ID" value="AT4G05520.2"/>
    <property type="gene ID" value="AT4G05520"/>
</dbReference>
<dbReference type="KEGG" id="ath:AT4G05520"/>
<dbReference type="Araport" id="AT4G05520"/>
<dbReference type="TAIR" id="AT4G05520">
    <property type="gene designation" value="EHD2"/>
</dbReference>
<dbReference type="eggNOG" id="KOG1954">
    <property type="taxonomic scope" value="Eukaryota"/>
</dbReference>
<dbReference type="InParanoid" id="B3LF48"/>
<dbReference type="OMA" id="ISAKKEM"/>
<dbReference type="PhylomeDB" id="B3LF48"/>
<dbReference type="CD-CODE" id="4299E36E">
    <property type="entry name" value="Nucleolus"/>
</dbReference>
<dbReference type="PRO" id="PR:B3LF48"/>
<dbReference type="Proteomes" id="UP000006548">
    <property type="component" value="Chromosome 4"/>
</dbReference>
<dbReference type="ExpressionAtlas" id="B3LF48">
    <property type="expression patterns" value="baseline and differential"/>
</dbReference>
<dbReference type="GO" id="GO:0005737">
    <property type="term" value="C:cytoplasm"/>
    <property type="evidence" value="ECO:0000314"/>
    <property type="project" value="TAIR"/>
</dbReference>
<dbReference type="GO" id="GO:0010008">
    <property type="term" value="C:endosome membrane"/>
    <property type="evidence" value="ECO:0007669"/>
    <property type="project" value="UniProtKB-SubCell"/>
</dbReference>
<dbReference type="GO" id="GO:0043231">
    <property type="term" value="C:intracellular membrane-bounded organelle"/>
    <property type="evidence" value="ECO:0000314"/>
    <property type="project" value="TAIR"/>
</dbReference>
<dbReference type="GO" id="GO:0016020">
    <property type="term" value="C:membrane"/>
    <property type="evidence" value="ECO:0000314"/>
    <property type="project" value="TAIR"/>
</dbReference>
<dbReference type="GO" id="GO:0005634">
    <property type="term" value="C:nucleus"/>
    <property type="evidence" value="ECO:0007669"/>
    <property type="project" value="UniProtKB-SubCell"/>
</dbReference>
<dbReference type="GO" id="GO:0005886">
    <property type="term" value="C:plasma membrane"/>
    <property type="evidence" value="ECO:0000314"/>
    <property type="project" value="TAIR"/>
</dbReference>
<dbReference type="GO" id="GO:0009506">
    <property type="term" value="C:plasmodesma"/>
    <property type="evidence" value="ECO:0007005"/>
    <property type="project" value="TAIR"/>
</dbReference>
<dbReference type="GO" id="GO:0005509">
    <property type="term" value="F:calcium ion binding"/>
    <property type="evidence" value="ECO:0007669"/>
    <property type="project" value="InterPro"/>
</dbReference>
<dbReference type="GO" id="GO:0003925">
    <property type="term" value="F:G protein activity"/>
    <property type="evidence" value="ECO:0007669"/>
    <property type="project" value="UniProtKB-EC"/>
</dbReference>
<dbReference type="GO" id="GO:0005525">
    <property type="term" value="F:GTP binding"/>
    <property type="evidence" value="ECO:0007669"/>
    <property type="project" value="UniProtKB-KW"/>
</dbReference>
<dbReference type="GO" id="GO:0006897">
    <property type="term" value="P:endocytosis"/>
    <property type="evidence" value="ECO:0000315"/>
    <property type="project" value="UniProtKB"/>
</dbReference>
<dbReference type="GO" id="GO:0051260">
    <property type="term" value="P:protein homooligomerization"/>
    <property type="evidence" value="ECO:0000314"/>
    <property type="project" value="UniProtKB"/>
</dbReference>
<dbReference type="GO" id="GO:0032956">
    <property type="term" value="P:regulation of actin cytoskeleton organization"/>
    <property type="evidence" value="ECO:0000315"/>
    <property type="project" value="UniProtKB"/>
</dbReference>
<dbReference type="CDD" id="cd00052">
    <property type="entry name" value="EH"/>
    <property type="match status" value="1"/>
</dbReference>
<dbReference type="CDD" id="cd09913">
    <property type="entry name" value="EHD"/>
    <property type="match status" value="1"/>
</dbReference>
<dbReference type="FunFam" id="3.40.50.300:FF:000147">
    <property type="entry name" value="EH domain-containing protein 1"/>
    <property type="match status" value="1"/>
</dbReference>
<dbReference type="Gene3D" id="1.10.268.20">
    <property type="match status" value="1"/>
</dbReference>
<dbReference type="Gene3D" id="1.10.238.10">
    <property type="entry name" value="EF-hand"/>
    <property type="match status" value="1"/>
</dbReference>
<dbReference type="Gene3D" id="3.40.50.300">
    <property type="entry name" value="P-loop containing nucleotide triphosphate hydrolases"/>
    <property type="match status" value="1"/>
</dbReference>
<dbReference type="InterPro" id="IPR040990">
    <property type="entry name" value="DUF5600"/>
</dbReference>
<dbReference type="InterPro" id="IPR045063">
    <property type="entry name" value="Dynamin_N"/>
</dbReference>
<dbReference type="InterPro" id="IPR011992">
    <property type="entry name" value="EF-hand-dom_pair"/>
</dbReference>
<dbReference type="InterPro" id="IPR002048">
    <property type="entry name" value="EF_hand_dom"/>
</dbReference>
<dbReference type="InterPro" id="IPR000261">
    <property type="entry name" value="EH_dom"/>
</dbReference>
<dbReference type="InterPro" id="IPR031692">
    <property type="entry name" value="EHD_N"/>
</dbReference>
<dbReference type="InterPro" id="IPR030381">
    <property type="entry name" value="G_DYNAMIN_dom"/>
</dbReference>
<dbReference type="InterPro" id="IPR027417">
    <property type="entry name" value="P-loop_NTPase"/>
</dbReference>
<dbReference type="PANTHER" id="PTHR11216">
    <property type="entry name" value="EH DOMAIN"/>
    <property type="match status" value="1"/>
</dbReference>
<dbReference type="PANTHER" id="PTHR11216:SF138">
    <property type="entry name" value="EH DOMAIN-CONTAINING PROTEIN 2"/>
    <property type="match status" value="1"/>
</dbReference>
<dbReference type="Pfam" id="PF18150">
    <property type="entry name" value="DUF5600"/>
    <property type="match status" value="1"/>
</dbReference>
<dbReference type="Pfam" id="PF00350">
    <property type="entry name" value="Dynamin_N"/>
    <property type="match status" value="1"/>
</dbReference>
<dbReference type="Pfam" id="PF12763">
    <property type="entry name" value="EH"/>
    <property type="match status" value="1"/>
</dbReference>
<dbReference type="Pfam" id="PF16880">
    <property type="entry name" value="EHD_N"/>
    <property type="match status" value="1"/>
</dbReference>
<dbReference type="SMART" id="SM00054">
    <property type="entry name" value="EFh"/>
    <property type="match status" value="2"/>
</dbReference>
<dbReference type="SMART" id="SM00027">
    <property type="entry name" value="EH"/>
    <property type="match status" value="1"/>
</dbReference>
<dbReference type="SUPFAM" id="SSF47473">
    <property type="entry name" value="EF-hand"/>
    <property type="match status" value="1"/>
</dbReference>
<dbReference type="SUPFAM" id="SSF52540">
    <property type="entry name" value="P-loop containing nucleoside triphosphate hydrolases"/>
    <property type="match status" value="1"/>
</dbReference>
<dbReference type="PROSITE" id="PS50222">
    <property type="entry name" value="EF_HAND_2"/>
    <property type="match status" value="2"/>
</dbReference>
<dbReference type="PROSITE" id="PS50031">
    <property type="entry name" value="EH"/>
    <property type="match status" value="1"/>
</dbReference>
<dbReference type="PROSITE" id="PS51718">
    <property type="entry name" value="G_DYNAMIN_2"/>
    <property type="match status" value="1"/>
</dbReference>
<organism evidence="16">
    <name type="scientific">Arabidopsis thaliana</name>
    <name type="common">Mouse-ear cress</name>
    <dbReference type="NCBI Taxonomy" id="3702"/>
    <lineage>
        <taxon>Eukaryota</taxon>
        <taxon>Viridiplantae</taxon>
        <taxon>Streptophyta</taxon>
        <taxon>Embryophyta</taxon>
        <taxon>Tracheophyta</taxon>
        <taxon>Spermatophyta</taxon>
        <taxon>Magnoliopsida</taxon>
        <taxon>eudicotyledons</taxon>
        <taxon>Gunneridae</taxon>
        <taxon>Pentapetalae</taxon>
        <taxon>rosids</taxon>
        <taxon>malvids</taxon>
        <taxon>Brassicales</taxon>
        <taxon>Brassicaceae</taxon>
        <taxon>Camelineae</taxon>
        <taxon>Arabidopsis</taxon>
    </lineage>
</organism>
<comment type="function">
    <text evidence="10 11">Involved in endocytosis negative regulation, probably by influencing actin organization. Acts in early endocytic membrane fusion and membrane trafficking of recycling endosomes. Exhibits an inhibitory effect on endocytosis when over-expressed.</text>
</comment>
<comment type="catalytic activity">
    <reaction evidence="7">
        <text>GTP + H2O = GDP + phosphate + H(+)</text>
        <dbReference type="Rhea" id="RHEA:19669"/>
        <dbReference type="ChEBI" id="CHEBI:15377"/>
        <dbReference type="ChEBI" id="CHEBI:15378"/>
        <dbReference type="ChEBI" id="CHEBI:37565"/>
        <dbReference type="ChEBI" id="CHEBI:43474"/>
        <dbReference type="ChEBI" id="CHEBI:58189"/>
        <dbReference type="EC" id="3.6.5.2"/>
    </reaction>
</comment>
<comment type="subunit">
    <text evidence="10 11">Homooligomer, and heterooligomer with EHD1 (PubMed:18547399). Interacts with AP-4 complex subunit sigma (At2g19790) (PubMed:19936242).</text>
</comment>
<comment type="subcellular location">
    <subcellularLocation>
        <location evidence="1">Endosome membrane</location>
        <topology evidence="1">Peripheral membrane protein</topology>
    </subcellularLocation>
    <subcellularLocation>
        <location evidence="10 11">Cell membrane</location>
        <topology evidence="10 11">Peripheral membrane protein</topology>
        <orientation evidence="3">Cytoplasmic side</orientation>
    </subcellularLocation>
    <subcellularLocation>
        <location evidence="8 10 11">Nucleus</location>
    </subcellularLocation>
    <subcellularLocation>
        <location evidence="10">Cytoplasm</location>
    </subcellularLocation>
</comment>
<comment type="alternative products">
    <event type="alternative splicing"/>
    <isoform>
        <id>B3LF48-1</id>
        <name>1</name>
        <sequence type="displayed"/>
    </isoform>
    <isoform>
        <id>B3LF48-2</id>
        <name>2</name>
        <sequence type="described" ref="VSP_057385"/>
    </isoform>
</comment>
<comment type="domain">
    <text evidence="11">The coiled coil domain (488-546) is required to inhibit endocytosis.</text>
</comment>
<comment type="disruption phenotype">
    <text evidence="10">Early flowering in short-day growth conditions.</text>
</comment>
<comment type="similarity">
    <text evidence="9">Belongs to the TRAFAC class dynamin-like GTPase superfamily. Dynamin/Fzo/YdjA family. EHD subfamily.</text>
</comment>
<comment type="sequence caution" evidence="13">
    <conflict type="erroneous gene model prediction">
        <sequence resource="EMBL-CDS" id="AAD48968"/>
    </conflict>
</comment>
<comment type="sequence caution" evidence="13">
    <conflict type="erroneous gene model prediction">
        <sequence resource="EMBL-CDS" id="CAB81094"/>
    </conflict>
</comment>
<protein>
    <recommendedName>
        <fullName evidence="12">EH domain-containing protein 2</fullName>
        <shortName evidence="12">AtEHD2</shortName>
        <ecNumber evidence="7">3.6.5.2</ecNumber>
    </recommendedName>
</protein>
<proteinExistence type="evidence at protein level"/>
<evidence type="ECO:0000250" key="1">
    <source>
        <dbReference type="UniProtKB" id="Q641Z6"/>
    </source>
</evidence>
<evidence type="ECO:0000250" key="2">
    <source>
        <dbReference type="UniProtKB" id="Q8BH64"/>
    </source>
</evidence>
<evidence type="ECO:0000250" key="3">
    <source>
        <dbReference type="UniProtKB" id="Q9WVK4"/>
    </source>
</evidence>
<evidence type="ECO:0000255" key="4"/>
<evidence type="ECO:0000255" key="5">
    <source>
        <dbReference type="PROSITE-ProRule" id="PRU00077"/>
    </source>
</evidence>
<evidence type="ECO:0000255" key="6">
    <source>
        <dbReference type="PROSITE-ProRule" id="PRU00448"/>
    </source>
</evidence>
<evidence type="ECO:0000255" key="7">
    <source>
        <dbReference type="PROSITE-ProRule" id="PRU00758"/>
    </source>
</evidence>
<evidence type="ECO:0000255" key="8">
    <source>
        <dbReference type="PROSITE-ProRule" id="PRU00768"/>
    </source>
</evidence>
<evidence type="ECO:0000255" key="9">
    <source>
        <dbReference type="PROSITE-ProRule" id="PRU01055"/>
    </source>
</evidence>
<evidence type="ECO:0000269" key="10">
    <source>
    </source>
</evidence>
<evidence type="ECO:0000269" key="11">
    <source>
    </source>
</evidence>
<evidence type="ECO:0000303" key="12">
    <source>
    </source>
</evidence>
<evidence type="ECO:0000305" key="13"/>
<evidence type="ECO:0000312" key="14">
    <source>
        <dbReference type="Araport" id="AT4G05520"/>
    </source>
</evidence>
<evidence type="ECO:0000312" key="15">
    <source>
        <dbReference type="EMBL" id="AAD48968.1"/>
    </source>
</evidence>
<evidence type="ECO:0000312" key="16">
    <source>
        <dbReference type="EMBL" id="ACE79044.1"/>
    </source>
</evidence>